<protein>
    <recommendedName>
        <fullName evidence="1">Small ribosomal subunit protein uS4</fullName>
    </recommendedName>
    <alternativeName>
        <fullName evidence="3">30S ribosomal protein S4</fullName>
    </alternativeName>
</protein>
<evidence type="ECO:0000255" key="1">
    <source>
        <dbReference type="HAMAP-Rule" id="MF_01306"/>
    </source>
</evidence>
<evidence type="ECO:0000256" key="2">
    <source>
        <dbReference type="SAM" id="MobiDB-lite"/>
    </source>
</evidence>
<evidence type="ECO:0000305" key="3"/>
<dbReference type="EMBL" id="CP000817">
    <property type="protein sequence ID" value="ACA41619.1"/>
    <property type="molecule type" value="Genomic_DNA"/>
</dbReference>
<dbReference type="RefSeq" id="WP_008176787.1">
    <property type="nucleotide sequence ID" value="NC_010382.1"/>
</dbReference>
<dbReference type="SMR" id="B1HX43"/>
<dbReference type="EnsemblBacteria" id="ACA41619">
    <property type="protein sequence ID" value="ACA41619"/>
    <property type="gene ID" value="Bsph_4158"/>
</dbReference>
<dbReference type="KEGG" id="lsp:Bsph_4158"/>
<dbReference type="HOGENOM" id="CLU_092403_0_1_9"/>
<dbReference type="Proteomes" id="UP000002164">
    <property type="component" value="Chromosome"/>
</dbReference>
<dbReference type="GO" id="GO:0015935">
    <property type="term" value="C:small ribosomal subunit"/>
    <property type="evidence" value="ECO:0007669"/>
    <property type="project" value="InterPro"/>
</dbReference>
<dbReference type="GO" id="GO:0019843">
    <property type="term" value="F:rRNA binding"/>
    <property type="evidence" value="ECO:0007669"/>
    <property type="project" value="UniProtKB-UniRule"/>
</dbReference>
<dbReference type="GO" id="GO:0003735">
    <property type="term" value="F:structural constituent of ribosome"/>
    <property type="evidence" value="ECO:0007669"/>
    <property type="project" value="InterPro"/>
</dbReference>
<dbReference type="GO" id="GO:0042274">
    <property type="term" value="P:ribosomal small subunit biogenesis"/>
    <property type="evidence" value="ECO:0007669"/>
    <property type="project" value="TreeGrafter"/>
</dbReference>
<dbReference type="GO" id="GO:0006412">
    <property type="term" value="P:translation"/>
    <property type="evidence" value="ECO:0007669"/>
    <property type="project" value="UniProtKB-UniRule"/>
</dbReference>
<dbReference type="CDD" id="cd00165">
    <property type="entry name" value="S4"/>
    <property type="match status" value="1"/>
</dbReference>
<dbReference type="FunFam" id="1.10.1050.10:FF:000001">
    <property type="entry name" value="30S ribosomal protein S4"/>
    <property type="match status" value="1"/>
</dbReference>
<dbReference type="FunFam" id="3.10.290.10:FF:000001">
    <property type="entry name" value="30S ribosomal protein S4"/>
    <property type="match status" value="1"/>
</dbReference>
<dbReference type="Gene3D" id="1.10.1050.10">
    <property type="entry name" value="Ribosomal Protein S4 Delta 41, Chain A, domain 1"/>
    <property type="match status" value="1"/>
</dbReference>
<dbReference type="Gene3D" id="3.10.290.10">
    <property type="entry name" value="RNA-binding S4 domain"/>
    <property type="match status" value="1"/>
</dbReference>
<dbReference type="HAMAP" id="MF_01306_B">
    <property type="entry name" value="Ribosomal_uS4_B"/>
    <property type="match status" value="1"/>
</dbReference>
<dbReference type="InterPro" id="IPR022801">
    <property type="entry name" value="Ribosomal_uS4"/>
</dbReference>
<dbReference type="InterPro" id="IPR005709">
    <property type="entry name" value="Ribosomal_uS4_bac-type"/>
</dbReference>
<dbReference type="InterPro" id="IPR018079">
    <property type="entry name" value="Ribosomal_uS4_CS"/>
</dbReference>
<dbReference type="InterPro" id="IPR001912">
    <property type="entry name" value="Ribosomal_uS4_N"/>
</dbReference>
<dbReference type="InterPro" id="IPR002942">
    <property type="entry name" value="S4_RNA-bd"/>
</dbReference>
<dbReference type="InterPro" id="IPR036986">
    <property type="entry name" value="S4_RNA-bd_sf"/>
</dbReference>
<dbReference type="NCBIfam" id="NF003717">
    <property type="entry name" value="PRK05327.1"/>
    <property type="match status" value="1"/>
</dbReference>
<dbReference type="NCBIfam" id="TIGR01017">
    <property type="entry name" value="rpsD_bact"/>
    <property type="match status" value="1"/>
</dbReference>
<dbReference type="PANTHER" id="PTHR11831">
    <property type="entry name" value="30S 40S RIBOSOMAL PROTEIN"/>
    <property type="match status" value="1"/>
</dbReference>
<dbReference type="PANTHER" id="PTHR11831:SF4">
    <property type="entry name" value="SMALL RIBOSOMAL SUBUNIT PROTEIN US4M"/>
    <property type="match status" value="1"/>
</dbReference>
<dbReference type="Pfam" id="PF00163">
    <property type="entry name" value="Ribosomal_S4"/>
    <property type="match status" value="1"/>
</dbReference>
<dbReference type="Pfam" id="PF01479">
    <property type="entry name" value="S4"/>
    <property type="match status" value="1"/>
</dbReference>
<dbReference type="SMART" id="SM01390">
    <property type="entry name" value="Ribosomal_S4"/>
    <property type="match status" value="1"/>
</dbReference>
<dbReference type="SMART" id="SM00363">
    <property type="entry name" value="S4"/>
    <property type="match status" value="1"/>
</dbReference>
<dbReference type="SUPFAM" id="SSF55174">
    <property type="entry name" value="Alpha-L RNA-binding motif"/>
    <property type="match status" value="1"/>
</dbReference>
<dbReference type="PROSITE" id="PS00632">
    <property type="entry name" value="RIBOSOMAL_S4"/>
    <property type="match status" value="1"/>
</dbReference>
<dbReference type="PROSITE" id="PS50889">
    <property type="entry name" value="S4"/>
    <property type="match status" value="1"/>
</dbReference>
<comment type="function">
    <text evidence="1">One of the primary rRNA binding proteins, it binds directly to 16S rRNA where it nucleates assembly of the body of the 30S subunit.</text>
</comment>
<comment type="function">
    <text evidence="1">With S5 and S12 plays an important role in translational accuracy.</text>
</comment>
<comment type="subunit">
    <text evidence="1">Part of the 30S ribosomal subunit. Contacts protein S5. The interaction surface between S4 and S5 is involved in control of translational fidelity.</text>
</comment>
<comment type="similarity">
    <text evidence="1">Belongs to the universal ribosomal protein uS4 family.</text>
</comment>
<keyword id="KW-0687">Ribonucleoprotein</keyword>
<keyword id="KW-0689">Ribosomal protein</keyword>
<keyword id="KW-0694">RNA-binding</keyword>
<keyword id="KW-0699">rRNA-binding</keyword>
<name>RS4_LYSSC</name>
<organism>
    <name type="scientific">Lysinibacillus sphaericus (strain C3-41)</name>
    <dbReference type="NCBI Taxonomy" id="444177"/>
    <lineage>
        <taxon>Bacteria</taxon>
        <taxon>Bacillati</taxon>
        <taxon>Bacillota</taxon>
        <taxon>Bacilli</taxon>
        <taxon>Bacillales</taxon>
        <taxon>Bacillaceae</taxon>
        <taxon>Lysinibacillus</taxon>
    </lineage>
</organism>
<gene>
    <name evidence="1" type="primary">rpsD</name>
    <name type="ordered locus">Bsph_4158</name>
</gene>
<feature type="chain" id="PRO_1000140755" description="Small ribosomal subunit protein uS4">
    <location>
        <begin position="1"/>
        <end position="200"/>
    </location>
</feature>
<feature type="domain" description="S4 RNA-binding" evidence="1">
    <location>
        <begin position="92"/>
        <end position="152"/>
    </location>
</feature>
<feature type="region of interest" description="Disordered" evidence="2">
    <location>
        <begin position="22"/>
        <end position="41"/>
    </location>
</feature>
<reference key="1">
    <citation type="journal article" date="2008" name="J. Bacteriol.">
        <title>Complete genome sequence of the mosquitocidal bacterium Bacillus sphaericus C3-41 and comparison with those of closely related Bacillus species.</title>
        <authorList>
            <person name="Hu X."/>
            <person name="Fan W."/>
            <person name="Han B."/>
            <person name="Liu H."/>
            <person name="Zheng D."/>
            <person name="Li Q."/>
            <person name="Dong W."/>
            <person name="Yan J."/>
            <person name="Gao M."/>
            <person name="Berry C."/>
            <person name="Yuan Z."/>
        </authorList>
    </citation>
    <scope>NUCLEOTIDE SEQUENCE [LARGE SCALE GENOMIC DNA]</scope>
    <source>
        <strain>C3-41</strain>
    </source>
</reference>
<accession>B1HX43</accession>
<proteinExistence type="inferred from homology"/>
<sequence length="200" mass="22984">MSRYTGPSWKLSRRLGISLSGTGKEIEKRPYAPGQHGPNQRKKLSEYGLQLQEKQKLRHMYGMNERQFRTLFNRAGKMKGVHGENFMILLETRLDNLVYRLGLARTRRGARQLVNHGHILVDGKRVDIPSFSVKPGQTISLREKSQNLAVVGEAIEVNNFVPDYLTFDADKKEGTFTRLPERSELSAEINESFIVEYYSR</sequence>